<evidence type="ECO:0000255" key="1"/>
<evidence type="ECO:0000256" key="2">
    <source>
        <dbReference type="SAM" id="MobiDB-lite"/>
    </source>
</evidence>
<evidence type="ECO:0000269" key="3">
    <source>
    </source>
</evidence>
<evidence type="ECO:0000269" key="4">
    <source>
    </source>
</evidence>
<evidence type="ECO:0000269" key="5">
    <source>
    </source>
</evidence>
<evidence type="ECO:0000269" key="6">
    <source>
    </source>
</evidence>
<evidence type="ECO:0000303" key="7">
    <source>
    </source>
</evidence>
<evidence type="ECO:0000303" key="8">
    <source>
    </source>
</evidence>
<evidence type="ECO:0000305" key="9"/>
<evidence type="ECO:0000312" key="10">
    <source>
        <dbReference type="MGI" id="MGI:2685725"/>
    </source>
</evidence>
<evidence type="ECO:0007744" key="11">
    <source>
    </source>
</evidence>
<evidence type="ECO:0007744" key="12">
    <source>
    </source>
</evidence>
<feature type="signal peptide" evidence="1">
    <location>
        <begin position="1"/>
        <end position="30"/>
    </location>
</feature>
<feature type="chain" id="PRO_0000326155" description="Protein shisa-6">
    <location>
        <begin position="31"/>
        <end position="525"/>
    </location>
</feature>
<feature type="topological domain" description="Extracellular" evidence="1">
    <location>
        <begin position="31"/>
        <end position="180"/>
    </location>
</feature>
<feature type="transmembrane region" description="Helical" evidence="1">
    <location>
        <begin position="181"/>
        <end position="201"/>
    </location>
</feature>
<feature type="topological domain" description="Cytoplasmic" evidence="1">
    <location>
        <begin position="202"/>
        <end position="525"/>
    </location>
</feature>
<feature type="region of interest" description="Disordered" evidence="2">
    <location>
        <begin position="241"/>
        <end position="294"/>
    </location>
</feature>
<feature type="region of interest" description="Disordered" evidence="2">
    <location>
        <begin position="469"/>
        <end position="495"/>
    </location>
</feature>
<feature type="short sequence motif" description="PDZ-binding" evidence="4">
    <location>
        <begin position="522"/>
        <end position="525"/>
    </location>
</feature>
<feature type="compositionally biased region" description="Polar residues" evidence="2">
    <location>
        <begin position="243"/>
        <end position="261"/>
    </location>
</feature>
<feature type="compositionally biased region" description="Polar residues" evidence="2">
    <location>
        <begin position="473"/>
        <end position="489"/>
    </location>
</feature>
<feature type="modified residue" description="Phosphoserine" evidence="12">
    <location>
        <position position="416"/>
    </location>
</feature>
<feature type="modified residue" description="Phosphoserine" evidence="12">
    <location>
        <position position="422"/>
    </location>
</feature>
<feature type="modified residue" description="Phosphoserine" evidence="11 12">
    <location>
        <position position="434"/>
    </location>
</feature>
<feature type="modified residue" description="Phosphothreonine" evidence="12">
    <location>
        <position position="458"/>
    </location>
</feature>
<feature type="modified residue" description="Phosphothreonine" evidence="12">
    <location>
        <position position="502"/>
    </location>
</feature>
<feature type="glycosylation site" description="N-linked (GlcNAc...) asparagine" evidence="1">
    <location>
        <position position="37"/>
    </location>
</feature>
<feature type="glycosylation site" description="N-linked (GlcNAc...) asparagine" evidence="1">
    <location>
        <position position="62"/>
    </location>
</feature>
<feature type="splice variant" id="VSP_059384" description="In isoform 2.">
    <original>P</original>
    <variation>PGHYGKDAYRSGGPDLHNFISSGFVTLGRGHTK</variation>
    <location>
        <position position="272"/>
    </location>
</feature>
<feature type="mutagenesis site" description="Loss of interaction with PDZ-domain of DLG4." evidence="4">
    <location>
        <begin position="522"/>
        <end position="525"/>
    </location>
</feature>
<protein>
    <recommendedName>
        <fullName evidence="9">Protein shisa-6</fullName>
    </recommendedName>
    <alternativeName>
        <fullName evidence="7">Cystine-knot AMPAR modulating protein of 52 kDa</fullName>
        <shortName evidence="7">CKAMP52</shortName>
    </alternativeName>
    <alternativeName>
        <fullName evidence="9">Shisa family member 6</fullName>
    </alternativeName>
</protein>
<dbReference type="EMBL" id="KU707904">
    <property type="protein sequence ID" value="AND76927.1"/>
    <property type="molecule type" value="mRNA"/>
</dbReference>
<dbReference type="EMBL" id="AK147504">
    <property type="protein sequence ID" value="BAE27958.1"/>
    <property type="molecule type" value="mRNA"/>
</dbReference>
<dbReference type="CCDS" id="CCDS24848.1">
    <molecule id="Q3UH99-1"/>
</dbReference>
<dbReference type="RefSeq" id="NP_001030046.1">
    <molecule id="Q3UH99-1"/>
    <property type="nucleotide sequence ID" value="NM_001034874.4"/>
</dbReference>
<dbReference type="RefSeq" id="NP_001402693.1">
    <molecule id="Q3UH99-2"/>
    <property type="nucleotide sequence ID" value="NM_001415764.1"/>
</dbReference>
<dbReference type="RefSeq" id="XP_006533682.1">
    <molecule id="Q3UH99-2"/>
    <property type="nucleotide sequence ID" value="XM_006533619.5"/>
</dbReference>
<dbReference type="RefSeq" id="XP_030101958.1">
    <molecule id="Q3UH99-2"/>
    <property type="nucleotide sequence ID" value="XM_030246098.2"/>
</dbReference>
<dbReference type="RefSeq" id="XP_036012708.1">
    <molecule id="Q3UH99-1"/>
    <property type="nucleotide sequence ID" value="XM_036156815.1"/>
</dbReference>
<dbReference type="SMR" id="Q3UH99"/>
<dbReference type="BioGRID" id="237606">
    <property type="interactions" value="4"/>
</dbReference>
<dbReference type="FunCoup" id="Q3UH99">
    <property type="interactions" value="100"/>
</dbReference>
<dbReference type="IntAct" id="Q3UH99">
    <property type="interactions" value="1"/>
</dbReference>
<dbReference type="MINT" id="Q3UH99"/>
<dbReference type="STRING" id="10090.ENSMUSP00000071025"/>
<dbReference type="GlyCosmos" id="Q3UH99">
    <property type="glycosylation" value="2 sites, No reported glycans"/>
</dbReference>
<dbReference type="GlyGen" id="Q3UH99">
    <property type="glycosylation" value="3 sites, 1 N-linked glycan (1 site), 1 O-linked glycan (1 site)"/>
</dbReference>
<dbReference type="iPTMnet" id="Q3UH99"/>
<dbReference type="PhosphoSitePlus" id="Q3UH99"/>
<dbReference type="PaxDb" id="10090-ENSMUSP00000071025"/>
<dbReference type="PeptideAtlas" id="Q3UH99"/>
<dbReference type="ProteomicsDB" id="257012">
    <molecule id="Q3UH99-1"/>
</dbReference>
<dbReference type="Antibodypedia" id="6361">
    <property type="antibodies" value="76 antibodies from 20 providers"/>
</dbReference>
<dbReference type="Ensembl" id="ENSMUST00000066679.7">
    <molecule id="Q3UH99-1"/>
    <property type="protein sequence ID" value="ENSMUSP00000071025.7"/>
    <property type="gene ID" value="ENSMUSG00000053930.14"/>
</dbReference>
<dbReference type="GeneID" id="380702"/>
<dbReference type="KEGG" id="mmu:380702"/>
<dbReference type="UCSC" id="uc007jlm.2">
    <molecule id="Q3UH99-1"/>
    <property type="organism name" value="mouse"/>
</dbReference>
<dbReference type="AGR" id="MGI:2685725"/>
<dbReference type="CTD" id="388336"/>
<dbReference type="MGI" id="MGI:2685725">
    <property type="gene designation" value="Shisa6"/>
</dbReference>
<dbReference type="VEuPathDB" id="HostDB:ENSMUSG00000053930"/>
<dbReference type="eggNOG" id="ENOG502QUEF">
    <property type="taxonomic scope" value="Eukaryota"/>
</dbReference>
<dbReference type="GeneTree" id="ENSGT00940000156854"/>
<dbReference type="InParanoid" id="Q3UH99"/>
<dbReference type="OMA" id="GKSTHQH"/>
<dbReference type="PhylomeDB" id="Q3UH99"/>
<dbReference type="TreeFam" id="TF330800"/>
<dbReference type="BioGRID-ORCS" id="380702">
    <property type="hits" value="2 hits in 77 CRISPR screens"/>
</dbReference>
<dbReference type="CD-CODE" id="CE726F99">
    <property type="entry name" value="Postsynaptic density"/>
</dbReference>
<dbReference type="ChiTaRS" id="Shisa6">
    <property type="organism name" value="mouse"/>
</dbReference>
<dbReference type="PRO" id="PR:Q3UH99"/>
<dbReference type="Proteomes" id="UP000000589">
    <property type="component" value="Chromosome 11"/>
</dbReference>
<dbReference type="RNAct" id="Q3UH99">
    <property type="molecule type" value="protein"/>
</dbReference>
<dbReference type="Bgee" id="ENSMUSG00000053930">
    <property type="expression patterns" value="Expressed in CA1 field of hippocampus and 92 other cell types or tissues"/>
</dbReference>
<dbReference type="ExpressionAtlas" id="Q3UH99">
    <property type="expression patterns" value="baseline and differential"/>
</dbReference>
<dbReference type="GO" id="GO:0032281">
    <property type="term" value="C:AMPA glutamate receptor complex"/>
    <property type="evidence" value="ECO:0000314"/>
    <property type="project" value="MGI"/>
</dbReference>
<dbReference type="GO" id="GO:0098985">
    <property type="term" value="C:asymmetric, glutamatergic, excitatory synapse"/>
    <property type="evidence" value="ECO:0000314"/>
    <property type="project" value="UniProtKB"/>
</dbReference>
<dbReference type="GO" id="GO:0098978">
    <property type="term" value="C:glutamatergic synapse"/>
    <property type="evidence" value="ECO:0000314"/>
    <property type="project" value="SynGO"/>
</dbReference>
<dbReference type="GO" id="GO:0014069">
    <property type="term" value="C:postsynaptic density"/>
    <property type="evidence" value="ECO:0000314"/>
    <property type="project" value="UniProtKB"/>
</dbReference>
<dbReference type="GO" id="GO:0098839">
    <property type="term" value="C:postsynaptic density membrane"/>
    <property type="evidence" value="ECO:0000314"/>
    <property type="project" value="SynGO"/>
</dbReference>
<dbReference type="GO" id="GO:0035255">
    <property type="term" value="F:ionotropic glutamate receptor binding"/>
    <property type="evidence" value="ECO:0000314"/>
    <property type="project" value="UniProtKB"/>
</dbReference>
<dbReference type="GO" id="GO:0030165">
    <property type="term" value="F:PDZ domain binding"/>
    <property type="evidence" value="ECO:0000353"/>
    <property type="project" value="UniProtKB"/>
</dbReference>
<dbReference type="GO" id="GO:0098976">
    <property type="term" value="P:excitatory chemical synaptic transmission"/>
    <property type="evidence" value="ECO:0000315"/>
    <property type="project" value="UniProtKB"/>
</dbReference>
<dbReference type="GO" id="GO:0090090">
    <property type="term" value="P:negative regulation of canonical Wnt signaling pathway"/>
    <property type="evidence" value="ECO:0000315"/>
    <property type="project" value="UniProtKB"/>
</dbReference>
<dbReference type="GO" id="GO:0098970">
    <property type="term" value="P:postsynaptic neurotransmitter receptor diffusion trapping"/>
    <property type="evidence" value="ECO:0000314"/>
    <property type="project" value="SynGO"/>
</dbReference>
<dbReference type="GO" id="GO:1904717">
    <property type="term" value="P:regulation of AMPA glutamate receptor clustering"/>
    <property type="evidence" value="ECO:0000315"/>
    <property type="project" value="UniProtKB"/>
</dbReference>
<dbReference type="GO" id="GO:0007283">
    <property type="term" value="P:spermatogenesis"/>
    <property type="evidence" value="ECO:0000315"/>
    <property type="project" value="UniProtKB"/>
</dbReference>
<dbReference type="GO" id="GO:0016055">
    <property type="term" value="P:Wnt signaling pathway"/>
    <property type="evidence" value="ECO:0007669"/>
    <property type="project" value="UniProtKB-KW"/>
</dbReference>
<dbReference type="InterPro" id="IPR026910">
    <property type="entry name" value="Shisa"/>
</dbReference>
<dbReference type="InterPro" id="IPR053891">
    <property type="entry name" value="Shisa_N"/>
</dbReference>
<dbReference type="PANTHER" id="PTHR31774:SF0">
    <property type="entry name" value="PROTEIN SHISA-6"/>
    <property type="match status" value="1"/>
</dbReference>
<dbReference type="PANTHER" id="PTHR31774">
    <property type="entry name" value="PROTEIN SHISA-9-RELATED"/>
    <property type="match status" value="1"/>
</dbReference>
<dbReference type="Pfam" id="PF13908">
    <property type="entry name" value="Shisa_N"/>
    <property type="match status" value="1"/>
</dbReference>
<name>SHSA6_MOUSE</name>
<organism>
    <name type="scientific">Mus musculus</name>
    <name type="common">Mouse</name>
    <dbReference type="NCBI Taxonomy" id="10090"/>
    <lineage>
        <taxon>Eukaryota</taxon>
        <taxon>Metazoa</taxon>
        <taxon>Chordata</taxon>
        <taxon>Craniata</taxon>
        <taxon>Vertebrata</taxon>
        <taxon>Euteleostomi</taxon>
        <taxon>Mammalia</taxon>
        <taxon>Eutheria</taxon>
        <taxon>Euarchontoglires</taxon>
        <taxon>Glires</taxon>
        <taxon>Rodentia</taxon>
        <taxon>Myomorpha</taxon>
        <taxon>Muroidea</taxon>
        <taxon>Muridae</taxon>
        <taxon>Murinae</taxon>
        <taxon>Mus</taxon>
        <taxon>Mus</taxon>
    </lineage>
</organism>
<accession>Q3UH99</accession>
<accession>A0A172Q417</accession>
<gene>
    <name evidence="7 8 10" type="primary">Shisa6</name>
    <name evidence="10" type="synonym">Gm879</name>
</gene>
<sequence>MALRRLLLPPLLLSLLLSLASLHLPPGADAARGRSGNRTLNAGAVGGRRAGGALARGGRELNSTARASGVPEAGSRRGQSAAAAAAAAAAASATVTYETCWGYYDVSGQYDKEFECNNSESGYLYCCGTCYYRFCCKKRHEKLDQRQCTNYQSPVWVQTPSTKVVSPGPENKYDPEKDKTNFTVYITCGVIAFVIVAGVFAKVSYDKAHRPPREMNIHRALADILRQQGPIPIAHCERETISAIDTSPKENTPVRSTSKNHYTPVRTAKQTPGDRQYNHPILSSATQTPTHEKPRMNNILTSATEPYDLSFSRSYQNLAHLPPSYESAVKTNPSKYSSLKRLTDKEADEYYMRRRHLPDLAARGTLPLNVIQMSQQKPLPRERPRRPIRAMSQDRVLSPRRGLPDEFGMPYDRILSDEQLLSTERLHSQDPLLSPERTAFPEQSLSRAISHTDVFVSTPVLDRYRMTKMHSHPSASNNSYATLGQSQTAAKRHAFASRRHNTVEQLHYIPGHHTCYTASKTEVTV</sequence>
<proteinExistence type="evidence at protein level"/>
<reference key="1">
    <citation type="journal article" date="2015" name="Elife">
        <title>Auxiliary subunits of the CKAMP family differentially modulate AMPA receptor properties.</title>
        <authorList>
            <person name="Farrow P."/>
            <person name="Khodosevich K."/>
            <person name="Sapir Y."/>
            <person name="Schulmann A."/>
            <person name="Aslam M."/>
            <person name="Stern-Bach Y."/>
            <person name="Monyer H."/>
            <person name="von Engelhardt J."/>
        </authorList>
    </citation>
    <scope>NUCLEOTIDE SEQUENCE [MRNA] (ISOFORM 2)</scope>
    <scope>TISSUE SPECIFICITY</scope>
    <scope>DEVELOPMENTAL STAGE</scope>
    <source>
        <strain>C57BL/6N</strain>
    </source>
</reference>
<reference key="2">
    <citation type="journal article" date="2005" name="Science">
        <title>The transcriptional landscape of the mammalian genome.</title>
        <authorList>
            <person name="Carninci P."/>
            <person name="Kasukawa T."/>
            <person name="Katayama S."/>
            <person name="Gough J."/>
            <person name="Frith M.C."/>
            <person name="Maeda N."/>
            <person name="Oyama R."/>
            <person name="Ravasi T."/>
            <person name="Lenhard B."/>
            <person name="Wells C."/>
            <person name="Kodzius R."/>
            <person name="Shimokawa K."/>
            <person name="Bajic V.B."/>
            <person name="Brenner S.E."/>
            <person name="Batalov S."/>
            <person name="Forrest A.R."/>
            <person name="Zavolan M."/>
            <person name="Davis M.J."/>
            <person name="Wilming L.G."/>
            <person name="Aidinis V."/>
            <person name="Allen J.E."/>
            <person name="Ambesi-Impiombato A."/>
            <person name="Apweiler R."/>
            <person name="Aturaliya R.N."/>
            <person name="Bailey T.L."/>
            <person name="Bansal M."/>
            <person name="Baxter L."/>
            <person name="Beisel K.W."/>
            <person name="Bersano T."/>
            <person name="Bono H."/>
            <person name="Chalk A.M."/>
            <person name="Chiu K.P."/>
            <person name="Choudhary V."/>
            <person name="Christoffels A."/>
            <person name="Clutterbuck D.R."/>
            <person name="Crowe M.L."/>
            <person name="Dalla E."/>
            <person name="Dalrymple B.P."/>
            <person name="de Bono B."/>
            <person name="Della Gatta G."/>
            <person name="di Bernardo D."/>
            <person name="Down T."/>
            <person name="Engstrom P."/>
            <person name="Fagiolini M."/>
            <person name="Faulkner G."/>
            <person name="Fletcher C.F."/>
            <person name="Fukushima T."/>
            <person name="Furuno M."/>
            <person name="Futaki S."/>
            <person name="Gariboldi M."/>
            <person name="Georgii-Hemming P."/>
            <person name="Gingeras T.R."/>
            <person name="Gojobori T."/>
            <person name="Green R.E."/>
            <person name="Gustincich S."/>
            <person name="Harbers M."/>
            <person name="Hayashi Y."/>
            <person name="Hensch T.K."/>
            <person name="Hirokawa N."/>
            <person name="Hill D."/>
            <person name="Huminiecki L."/>
            <person name="Iacono M."/>
            <person name="Ikeo K."/>
            <person name="Iwama A."/>
            <person name="Ishikawa T."/>
            <person name="Jakt M."/>
            <person name="Kanapin A."/>
            <person name="Katoh M."/>
            <person name="Kawasawa Y."/>
            <person name="Kelso J."/>
            <person name="Kitamura H."/>
            <person name="Kitano H."/>
            <person name="Kollias G."/>
            <person name="Krishnan S.P."/>
            <person name="Kruger A."/>
            <person name="Kummerfeld S.K."/>
            <person name="Kurochkin I.V."/>
            <person name="Lareau L.F."/>
            <person name="Lazarevic D."/>
            <person name="Lipovich L."/>
            <person name="Liu J."/>
            <person name="Liuni S."/>
            <person name="McWilliam S."/>
            <person name="Madan Babu M."/>
            <person name="Madera M."/>
            <person name="Marchionni L."/>
            <person name="Matsuda H."/>
            <person name="Matsuzawa S."/>
            <person name="Miki H."/>
            <person name="Mignone F."/>
            <person name="Miyake S."/>
            <person name="Morris K."/>
            <person name="Mottagui-Tabar S."/>
            <person name="Mulder N."/>
            <person name="Nakano N."/>
            <person name="Nakauchi H."/>
            <person name="Ng P."/>
            <person name="Nilsson R."/>
            <person name="Nishiguchi S."/>
            <person name="Nishikawa S."/>
            <person name="Nori F."/>
            <person name="Ohara O."/>
            <person name="Okazaki Y."/>
            <person name="Orlando V."/>
            <person name="Pang K.C."/>
            <person name="Pavan W.J."/>
            <person name="Pavesi G."/>
            <person name="Pesole G."/>
            <person name="Petrovsky N."/>
            <person name="Piazza S."/>
            <person name="Reed J."/>
            <person name="Reid J.F."/>
            <person name="Ring B.Z."/>
            <person name="Ringwald M."/>
            <person name="Rost B."/>
            <person name="Ruan Y."/>
            <person name="Salzberg S.L."/>
            <person name="Sandelin A."/>
            <person name="Schneider C."/>
            <person name="Schoenbach C."/>
            <person name="Sekiguchi K."/>
            <person name="Semple C.A."/>
            <person name="Seno S."/>
            <person name="Sessa L."/>
            <person name="Sheng Y."/>
            <person name="Shibata Y."/>
            <person name="Shimada H."/>
            <person name="Shimada K."/>
            <person name="Silva D."/>
            <person name="Sinclair B."/>
            <person name="Sperling S."/>
            <person name="Stupka E."/>
            <person name="Sugiura K."/>
            <person name="Sultana R."/>
            <person name="Takenaka Y."/>
            <person name="Taki K."/>
            <person name="Tammoja K."/>
            <person name="Tan S.L."/>
            <person name="Tang S."/>
            <person name="Taylor M.S."/>
            <person name="Tegner J."/>
            <person name="Teichmann S.A."/>
            <person name="Ueda H.R."/>
            <person name="van Nimwegen E."/>
            <person name="Verardo R."/>
            <person name="Wei C.L."/>
            <person name="Yagi K."/>
            <person name="Yamanishi H."/>
            <person name="Zabarovsky E."/>
            <person name="Zhu S."/>
            <person name="Zimmer A."/>
            <person name="Hide W."/>
            <person name="Bult C."/>
            <person name="Grimmond S.M."/>
            <person name="Teasdale R.D."/>
            <person name="Liu E.T."/>
            <person name="Brusic V."/>
            <person name="Quackenbush J."/>
            <person name="Wahlestedt C."/>
            <person name="Mattick J.S."/>
            <person name="Hume D.A."/>
            <person name="Kai C."/>
            <person name="Sasaki D."/>
            <person name="Tomaru Y."/>
            <person name="Fukuda S."/>
            <person name="Kanamori-Katayama M."/>
            <person name="Suzuki M."/>
            <person name="Aoki J."/>
            <person name="Arakawa T."/>
            <person name="Iida J."/>
            <person name="Imamura K."/>
            <person name="Itoh M."/>
            <person name="Kato T."/>
            <person name="Kawaji H."/>
            <person name="Kawagashira N."/>
            <person name="Kawashima T."/>
            <person name="Kojima M."/>
            <person name="Kondo S."/>
            <person name="Konno H."/>
            <person name="Nakano K."/>
            <person name="Ninomiya N."/>
            <person name="Nishio T."/>
            <person name="Okada M."/>
            <person name="Plessy C."/>
            <person name="Shibata K."/>
            <person name="Shiraki T."/>
            <person name="Suzuki S."/>
            <person name="Tagami M."/>
            <person name="Waki K."/>
            <person name="Watahiki A."/>
            <person name="Okamura-Oho Y."/>
            <person name="Suzuki H."/>
            <person name="Kawai J."/>
            <person name="Hayashizaki Y."/>
        </authorList>
    </citation>
    <scope>NUCLEOTIDE SEQUENCE [LARGE SCALE MRNA] (ISOFORM 1)</scope>
    <source>
        <strain>C57BL/6J</strain>
    </source>
</reference>
<reference key="3">
    <citation type="journal article" date="2006" name="Mol. Cell. Proteomics">
        <title>Comprehensive identification of phosphorylation sites in postsynaptic density preparations.</title>
        <authorList>
            <person name="Trinidad J.C."/>
            <person name="Specht C.G."/>
            <person name="Thalhammer A."/>
            <person name="Schoepfer R."/>
            <person name="Burlingame A.L."/>
        </authorList>
    </citation>
    <scope>PHOSPHORYLATION [LARGE SCALE ANALYSIS] AT SER-434</scope>
    <scope>IDENTIFICATION BY MASS SPECTROMETRY [LARGE SCALE ANALYSIS]</scope>
    <source>
        <tissue>Brain</tissue>
    </source>
</reference>
<reference key="4">
    <citation type="journal article" date="2010" name="Cell">
        <title>A tissue-specific atlas of mouse protein phosphorylation and expression.</title>
        <authorList>
            <person name="Huttlin E.L."/>
            <person name="Jedrychowski M.P."/>
            <person name="Elias J.E."/>
            <person name="Goswami T."/>
            <person name="Rad R."/>
            <person name="Beausoleil S.A."/>
            <person name="Villen J."/>
            <person name="Haas W."/>
            <person name="Sowa M.E."/>
            <person name="Gygi S.P."/>
        </authorList>
    </citation>
    <scope>PHOSPHORYLATION [LARGE SCALE ANALYSIS] AT SER-416; SER-422; SER-434; THR-458 AND THR-502</scope>
    <scope>IDENTIFICATION BY MASS SPECTROMETRY [LARGE SCALE ANALYSIS]</scope>
    <source>
        <tissue>Brain</tissue>
    </source>
</reference>
<reference key="5">
    <citation type="journal article" date="2016" name="Nat. Commun.">
        <title>Shisa6 traps AMPA receptors at postsynaptic sites and prevents their desensitization during synaptic activity.</title>
        <authorList>
            <person name="Klaassen R.V."/>
            <person name="Stroeder J."/>
            <person name="Coussen F."/>
            <person name="Hafner A.S."/>
            <person name="Petersen J.D."/>
            <person name="Renancio C."/>
            <person name="Schmitz L.J."/>
            <person name="Normand E."/>
            <person name="Lodder J.C."/>
            <person name="Rotaru D.C."/>
            <person name="Rao-Ruiz P."/>
            <person name="Spijker S."/>
            <person name="Mansvelder H.D."/>
            <person name="Choquet D."/>
            <person name="Smit A.B."/>
        </authorList>
    </citation>
    <scope>IDENTIFICATION BY MASS SPECTROMETRY</scope>
    <scope>FUNCTION</scope>
    <scope>TISSUE SPECIFICITY</scope>
    <scope>DEVELOPMENTAL STAGE</scope>
    <scope>SUBCELLULAR LOCATION</scope>
    <scope>DOMAIN</scope>
    <scope>MUTAGENESIS OF 522-GLU--VAL-525</scope>
    <scope>DISRUPTION PHENOTYPE</scope>
    <scope>IDENTIFICATION IN AMPAR COMPLEX</scope>
    <scope>GLYCOSYLATION</scope>
</reference>
<reference key="6">
    <citation type="journal article" date="2017" name="Elife">
        <title>The AMPA receptor-associated protein Shisa7 regulates hippocampal synaptic function and contextual memory.</title>
        <authorList>
            <person name="Schmitz L.J.M."/>
            <person name="Klaassen R.V."/>
            <person name="Ruiperez-Alonso M."/>
            <person name="Zamri A.E."/>
            <person name="Stroeder J."/>
            <person name="Rao-Ruiz P."/>
            <person name="Lodder J.C."/>
            <person name="van der Loo R.J."/>
            <person name="Mansvelder H.D."/>
            <person name="Smit A.B."/>
            <person name="Spijker S."/>
        </authorList>
    </citation>
    <scope>IDENTIFICATION BY MASS SPECTROMETRY</scope>
    <scope>IDENTIFICATION IN AMPAR COMPLEX</scope>
</reference>
<reference key="7">
    <citation type="journal article" date="2017" name="Stem Cell Reports">
        <title>SHISA6 Confers Resistance to Differentiation-Promoting Wnt/beta-Catenin Signaling in Mouse Spermatogenic Stem Cells.</title>
        <authorList>
            <person name="Tokue M."/>
            <person name="Ikami K."/>
            <person name="Mizuno S."/>
            <person name="Takagi C."/>
            <person name="Miyagi A."/>
            <person name="Takada R."/>
            <person name="Noda C."/>
            <person name="Kitadate Y."/>
            <person name="Hara K."/>
            <person name="Mizuguchi H."/>
            <person name="Sato T."/>
            <person name="Taketo M.M."/>
            <person name="Sugiyama F."/>
            <person name="Ogawa T."/>
            <person name="Kobayashi S."/>
            <person name="Ueno N."/>
            <person name="Takahashi S."/>
            <person name="Takada S."/>
            <person name="Yoshida S."/>
        </authorList>
    </citation>
    <scope>FUNCTION</scope>
    <scope>TISSUE SPECIFICITY</scope>
</reference>
<keyword id="KW-0025">Alternative splicing</keyword>
<keyword id="KW-1003">Cell membrane</keyword>
<keyword id="KW-0325">Glycoprotein</keyword>
<keyword id="KW-0472">Membrane</keyword>
<keyword id="KW-0597">Phosphoprotein</keyword>
<keyword id="KW-0628">Postsynaptic cell membrane</keyword>
<keyword id="KW-1185">Reference proteome</keyword>
<keyword id="KW-0732">Signal</keyword>
<keyword id="KW-0770">Synapse</keyword>
<keyword id="KW-0812">Transmembrane</keyword>
<keyword id="KW-1133">Transmembrane helix</keyword>
<keyword id="KW-0879">Wnt signaling pathway</keyword>
<comment type="function">
    <text evidence="4 5">Involved in maintenance of high-frequency synaptic transmission at hippocampal CA3-CA1 synapses. Regulates AMPA-type glutamate receptor (AMPAR) immobilization at postsynaptic density keeping the channels in an activated state in the presence of glutamate and preventing synaptic depression (PubMed:26931375). May play a role in self-renewal and differentiation of spermatogonial stem cells by inhibiting canonical Wnt signaling pathway (PubMed:28196692).</text>
</comment>
<comment type="subunit">
    <text evidence="4 6">Component of the postsynaptic hippocampal AMPA-type glutamate receptor (AMPAR) complex, at least composed of pore forming AMPAR subunits GRIA1, GRIA2 and GRIA3 and AMPAR auxiliary proteins SHISA6 and SHISA7 (PubMed:26931375, PubMed:29199957). Interacts (via PDZ-binding motif) with DLG4/PSD-95 (via PDZ domain); the interaction is direct (PubMed:26931375).</text>
</comment>
<comment type="subcellular location">
    <subcellularLocation>
        <location evidence="4">Postsynaptic density membrane</location>
        <topology evidence="9">Single-pass type I membrane protein</topology>
    </subcellularLocation>
</comment>
<comment type="alternative products">
    <event type="alternative splicing"/>
    <isoform>
        <id>Q3UH99-1</id>
        <name>1</name>
        <sequence type="displayed"/>
    </isoform>
    <isoform>
        <id>Q3UH99-2</id>
        <name>2</name>
        <sequence type="described" ref="VSP_059384"/>
    </isoform>
</comment>
<comment type="tissue specificity">
    <text evidence="3 4 5">Highly expressed in cerebellum and hippocampal neurons: CA1 stratum oriens and stratum radiatum, CA3 stratum oriens and stratum lucidum, and the dentate gyrus polymorphic layer (PubMed:26931375). Expressed in other brain structures including olfactory bulb, cortex, amygdala and midbrain (at protein level) (PubMed:26623514, PubMed:26931375). Also expressed in a subset of spermatogonial stem cells (PubMed:28196692). Also expressed in eye, heart, kidney, lung, muscle and spleen. Isoform 2: Specifically expressed in hippocampus (PubMed:26931375).</text>
</comment>
<comment type="developmental stage">
    <text evidence="3">Barely detectable in the brain of embryonic day 17 (17 dpc). Expressed in hippocampus and septum from postnatal day 1 (P1) and then in cerebellum and olfactory bulb from postnatal day 7 (P7).</text>
</comment>
<comment type="domain">
    <text evidence="4">The PDZ-binding motif interacts with PDZ-domain of scaffolding protein DLG4.</text>
</comment>
<comment type="PTM">
    <text evidence="4">N-glycosylated.</text>
</comment>
<comment type="disruption phenotype">
    <text evidence="4">Decreases decay times of miniature excitatory postsynaptic currents (mEPSCs) and light-induced AMPA-type glutamate receptor (AMPAR) currents in CA1 pyramidal cell.</text>
</comment>
<comment type="similarity">
    <text evidence="9">Belongs to the shisa family.</text>
</comment>